<organism>
    <name type="scientific">Cyanidium caldarium</name>
    <name type="common">Red alga</name>
    <dbReference type="NCBI Taxonomy" id="2771"/>
    <lineage>
        <taxon>Eukaryota</taxon>
        <taxon>Rhodophyta</taxon>
        <taxon>Bangiophyceae</taxon>
        <taxon>Cyanidiales</taxon>
        <taxon>Cyanidiaceae</taxon>
        <taxon>Cyanidium</taxon>
    </lineage>
</organism>
<protein>
    <recommendedName>
        <fullName evidence="1">Thiazole synthase</fullName>
        <ecNumber evidence="1">2.8.1.10</ecNumber>
    </recommendedName>
</protein>
<sequence>MNKDFCIKNKKFQSRLILGTGRYRSLLEAKQSIEASGCDIVTVAIRRINADNIGFIKSLIKLINWQKYWLLPNTAGCQTAEEAIRVANLGQEIAKQLGQVDNNFVKLEVIPANKYLFPDPIGTLKAAEHLVKQGFVVLPYINSDPILAKQLEDIGCSAVMPLASAIGSGQGLKNIDNIRIIVEASKVPVIVDAGIGVPSEATQVMEIGADAVLINTAVAQCKVPVAMANAMRLAVAAGYEAHSAGRIPIKNYARTSSPNFDRIGQI</sequence>
<keyword id="KW-0150">Chloroplast</keyword>
<keyword id="KW-0934">Plastid</keyword>
<keyword id="KW-0704">Schiff base</keyword>
<keyword id="KW-0784">Thiamine biosynthesis</keyword>
<keyword id="KW-0808">Transferase</keyword>
<gene>
    <name evidence="1" type="primary">thiG</name>
</gene>
<name>THIG_CYACA</name>
<feature type="chain" id="PRO_0000162885" description="Thiazole synthase">
    <location>
        <begin position="1"/>
        <end position="266"/>
    </location>
</feature>
<feature type="active site" description="Schiff-base intermediate with DXP" evidence="1">
    <location>
        <position position="106"/>
    </location>
</feature>
<feature type="binding site" evidence="1">
    <location>
        <position position="167"/>
    </location>
    <ligand>
        <name>1-deoxy-D-xylulose 5-phosphate</name>
        <dbReference type="ChEBI" id="CHEBI:57792"/>
    </ligand>
</feature>
<feature type="binding site" evidence="1">
    <location>
        <begin position="193"/>
        <end position="194"/>
    </location>
    <ligand>
        <name>1-deoxy-D-xylulose 5-phosphate</name>
        <dbReference type="ChEBI" id="CHEBI:57792"/>
    </ligand>
</feature>
<feature type="binding site" evidence="1">
    <location>
        <begin position="215"/>
        <end position="216"/>
    </location>
    <ligand>
        <name>1-deoxy-D-xylulose 5-phosphate</name>
        <dbReference type="ChEBI" id="CHEBI:57792"/>
    </ligand>
</feature>
<geneLocation type="chloroplast"/>
<reference key="1">
    <citation type="journal article" date="2000" name="J. Mol. Evol.">
        <title>The structure and gene repertoire of an ancient red algal plastid genome.</title>
        <authorList>
            <person name="Gloeckner G."/>
            <person name="Rosenthal A."/>
            <person name="Valentin K.-U."/>
        </authorList>
    </citation>
    <scope>NUCLEOTIDE SEQUENCE [LARGE SCALE GENOMIC DNA]</scope>
    <source>
        <strain>RK-1</strain>
    </source>
</reference>
<evidence type="ECO:0000255" key="1">
    <source>
        <dbReference type="HAMAP-Rule" id="MF_00443"/>
    </source>
</evidence>
<evidence type="ECO:0000305" key="2"/>
<accession>O19915</accession>
<dbReference type="EC" id="2.8.1.10" evidence="1"/>
<dbReference type="EMBL" id="AF022186">
    <property type="protein sequence ID" value="AAB82674.1"/>
    <property type="status" value="ALT_INIT"/>
    <property type="molecule type" value="Genomic_DNA"/>
</dbReference>
<dbReference type="PIR" id="T11983">
    <property type="entry name" value="T11983"/>
</dbReference>
<dbReference type="RefSeq" id="NP_045087.1">
    <property type="nucleotide sequence ID" value="NC_001840.1"/>
</dbReference>
<dbReference type="SMR" id="O19915"/>
<dbReference type="GeneID" id="800163"/>
<dbReference type="UniPathway" id="UPA00060"/>
<dbReference type="GO" id="GO:0009507">
    <property type="term" value="C:chloroplast"/>
    <property type="evidence" value="ECO:0007669"/>
    <property type="project" value="UniProtKB-SubCell"/>
</dbReference>
<dbReference type="GO" id="GO:1990107">
    <property type="term" value="F:thiazole synthase activity"/>
    <property type="evidence" value="ECO:0007669"/>
    <property type="project" value="UniProtKB-EC"/>
</dbReference>
<dbReference type="GO" id="GO:0009229">
    <property type="term" value="P:thiamine diphosphate biosynthetic process"/>
    <property type="evidence" value="ECO:0007669"/>
    <property type="project" value="UniProtKB-UniRule"/>
</dbReference>
<dbReference type="CDD" id="cd04728">
    <property type="entry name" value="ThiG"/>
    <property type="match status" value="1"/>
</dbReference>
<dbReference type="Gene3D" id="3.20.20.70">
    <property type="entry name" value="Aldolase class I"/>
    <property type="match status" value="1"/>
</dbReference>
<dbReference type="HAMAP" id="MF_00443">
    <property type="entry name" value="ThiG"/>
    <property type="match status" value="1"/>
</dbReference>
<dbReference type="InterPro" id="IPR013785">
    <property type="entry name" value="Aldolase_TIM"/>
</dbReference>
<dbReference type="InterPro" id="IPR033983">
    <property type="entry name" value="Thiazole_synthase_ThiG"/>
</dbReference>
<dbReference type="InterPro" id="IPR008867">
    <property type="entry name" value="ThiG"/>
</dbReference>
<dbReference type="PANTHER" id="PTHR34266">
    <property type="entry name" value="THIAZOLE SYNTHASE"/>
    <property type="match status" value="1"/>
</dbReference>
<dbReference type="PANTHER" id="PTHR34266:SF2">
    <property type="entry name" value="THIAZOLE SYNTHASE"/>
    <property type="match status" value="1"/>
</dbReference>
<dbReference type="Pfam" id="PF05690">
    <property type="entry name" value="ThiG"/>
    <property type="match status" value="1"/>
</dbReference>
<dbReference type="SUPFAM" id="SSF110399">
    <property type="entry name" value="ThiG-like"/>
    <property type="match status" value="1"/>
</dbReference>
<proteinExistence type="inferred from homology"/>
<comment type="function">
    <text evidence="1">Catalyzes the rearrangement of 1-deoxy-D-xylulose 5-phosphate (DXP) to produce the thiazole phosphate moiety of thiamine. Sulfur is provided by the thiocarboxylate moiety of the carrier protein ThiS. In vitro, sulfur can be provided by H(2)S.</text>
</comment>
<comment type="catalytic activity">
    <reaction evidence="1">
        <text>[ThiS sulfur-carrier protein]-C-terminal-Gly-aminoethanethioate + 2-iminoacetate + 1-deoxy-D-xylulose 5-phosphate = [ThiS sulfur-carrier protein]-C-terminal Gly-Gly + 2-[(2R,5Z)-2-carboxy-4-methylthiazol-5(2H)-ylidene]ethyl phosphate + 2 H2O + H(+)</text>
        <dbReference type="Rhea" id="RHEA:26297"/>
        <dbReference type="Rhea" id="RHEA-COMP:12909"/>
        <dbReference type="Rhea" id="RHEA-COMP:19908"/>
        <dbReference type="ChEBI" id="CHEBI:15377"/>
        <dbReference type="ChEBI" id="CHEBI:15378"/>
        <dbReference type="ChEBI" id="CHEBI:57792"/>
        <dbReference type="ChEBI" id="CHEBI:62899"/>
        <dbReference type="ChEBI" id="CHEBI:77846"/>
        <dbReference type="ChEBI" id="CHEBI:90778"/>
        <dbReference type="ChEBI" id="CHEBI:232372"/>
        <dbReference type="EC" id="2.8.1.10"/>
    </reaction>
</comment>
<comment type="pathway">
    <text evidence="1">Cofactor biosynthesis; thiamine diphosphate biosynthesis.</text>
</comment>
<comment type="subunit">
    <text evidence="1">Homotetramer. Forms heterodimers with either ThiH or ThiS.</text>
</comment>
<comment type="subcellular location">
    <subcellularLocation>
        <location>Plastid</location>
        <location>Chloroplast</location>
    </subcellularLocation>
</comment>
<comment type="similarity">
    <text evidence="1">Belongs to the ThiG family.</text>
</comment>
<comment type="sequence caution" evidence="2">
    <conflict type="erroneous initiation">
        <sequence resource="EMBL-CDS" id="AAB82674"/>
    </conflict>
</comment>